<sequence length="874" mass="94867">MKSSEIRQKFLQFFQSKGHTIVPSSSLVPANDPTLLFTNSGMVQFKDVFTGKEARAYKRATSSQRSVRAGGKHNDLENVGYTARHHTFFEMLGNFSFGDYFKREAIQYAWELLTQVYRLPAEKLWVTVYQEDDEAYDIWAKEVGVPAERIIRIGDNKGARYASDNFWQMADTGPCGPCSEIFYDHGPEIWGGPPGSPEEDGDRYIEIWNLVFMQFERDAAGNMERLPKPCVDTGMGLERIAAVLQHVHSNYEIDLFQKLIAAAARETGVKDLADNSLKVIADHIRACAFLIVDGIIPSNEGRGYVLRRIVRRALRHGYKLGQTKPFFHRLVPDLVAEMGEAYPELAQVAERVAQVLRQEEERFGETLEHGMKILDGALAKVAKGDPLDGTTLFTLYDTYGFPVDLTADICRERGVEVDMAGFEAAMQRQREQARAAGKFKMAEGLSYEGAETRFEGYESLELSGVKVTALYVEGTQVEQVSAGQDAVVVLDATPFYAESGGQVGDTGLLEAGGVRFAVADTLKIQPGVFGHHGTLEAGALKVGDTLLARVDAVRRARTVRNHSATHLMHKALREVLGAHVQQRGSLVDPDKTRFDFAHDAPMTAEQIARVEAIVNAEVLANQATEAKVMAYDDAVKGGAMALFGEKYGDTVRVLDIGFSRELCGGTHVRRTGDIGLFKVVSEGGVAAGVRRIEAITGDNALAWVQDQNALLQRAAGVLRAPAHELPERIVQVQEQLKALEKELEQARTKLAASAGNDLAATATVEVKGIKVLAASIGDVDPKALRGMVDNLKDRLKPAVVLLAAGSADGKISLVGGVTADLTGRIKAGDLVGFVAGQVGGKGGGRPDMAMGGGTDLAALPAAVASVQKWVDERL</sequence>
<gene>
    <name evidence="1" type="primary">alaS</name>
    <name type="synonym">lovB</name>
    <name type="ordered locus">BB3191</name>
</gene>
<comment type="function">
    <text evidence="1">Catalyzes the attachment of alanine to tRNA(Ala) in a two-step reaction: alanine is first activated by ATP to form Ala-AMP and then transferred to the acceptor end of tRNA(Ala). Also edits incorrectly charged Ser-tRNA(Ala) and Gly-tRNA(Ala) via its editing domain.</text>
</comment>
<comment type="catalytic activity">
    <reaction evidence="1">
        <text>tRNA(Ala) + L-alanine + ATP = L-alanyl-tRNA(Ala) + AMP + diphosphate</text>
        <dbReference type="Rhea" id="RHEA:12540"/>
        <dbReference type="Rhea" id="RHEA-COMP:9657"/>
        <dbReference type="Rhea" id="RHEA-COMP:9923"/>
        <dbReference type="ChEBI" id="CHEBI:30616"/>
        <dbReference type="ChEBI" id="CHEBI:33019"/>
        <dbReference type="ChEBI" id="CHEBI:57972"/>
        <dbReference type="ChEBI" id="CHEBI:78442"/>
        <dbReference type="ChEBI" id="CHEBI:78497"/>
        <dbReference type="ChEBI" id="CHEBI:456215"/>
        <dbReference type="EC" id="6.1.1.7"/>
    </reaction>
</comment>
<comment type="cofactor">
    <cofactor evidence="1">
        <name>Zn(2+)</name>
        <dbReference type="ChEBI" id="CHEBI:29105"/>
    </cofactor>
    <text evidence="1">Binds 1 zinc ion per subunit.</text>
</comment>
<comment type="subcellular location">
    <subcellularLocation>
        <location evidence="1">Cytoplasm</location>
    </subcellularLocation>
</comment>
<comment type="domain">
    <text evidence="1">Consists of three domains; the N-terminal catalytic domain, the editing domain and the C-terminal C-Ala domain. The editing domain removes incorrectly charged amino acids, while the C-Ala domain, along with tRNA(Ala), serves as a bridge to cooperatively bring together the editing and aminoacylation centers thus stimulating deacylation of misacylated tRNAs.</text>
</comment>
<comment type="similarity">
    <text evidence="1">Belongs to the class-II aminoacyl-tRNA synthetase family.</text>
</comment>
<feature type="chain" id="PRO_0000075069" description="Alanine--tRNA ligase">
    <location>
        <begin position="1"/>
        <end position="874"/>
    </location>
</feature>
<feature type="binding site" evidence="1">
    <location>
        <position position="562"/>
    </location>
    <ligand>
        <name>Zn(2+)</name>
        <dbReference type="ChEBI" id="CHEBI:29105"/>
    </ligand>
</feature>
<feature type="binding site" evidence="1">
    <location>
        <position position="566"/>
    </location>
    <ligand>
        <name>Zn(2+)</name>
        <dbReference type="ChEBI" id="CHEBI:29105"/>
    </ligand>
</feature>
<feature type="binding site" evidence="1">
    <location>
        <position position="663"/>
    </location>
    <ligand>
        <name>Zn(2+)</name>
        <dbReference type="ChEBI" id="CHEBI:29105"/>
    </ligand>
</feature>
<feature type="binding site" evidence="1">
    <location>
        <position position="667"/>
    </location>
    <ligand>
        <name>Zn(2+)</name>
        <dbReference type="ChEBI" id="CHEBI:29105"/>
    </ligand>
</feature>
<reference key="1">
    <citation type="journal article" date="2003" name="Nat. Genet.">
        <title>Comparative analysis of the genome sequences of Bordetella pertussis, Bordetella parapertussis and Bordetella bronchiseptica.</title>
        <authorList>
            <person name="Parkhill J."/>
            <person name="Sebaihia M."/>
            <person name="Preston A."/>
            <person name="Murphy L.D."/>
            <person name="Thomson N.R."/>
            <person name="Harris D.E."/>
            <person name="Holden M.T.G."/>
            <person name="Churcher C.M."/>
            <person name="Bentley S.D."/>
            <person name="Mungall K.L."/>
            <person name="Cerdeno-Tarraga A.-M."/>
            <person name="Temple L."/>
            <person name="James K.D."/>
            <person name="Harris B."/>
            <person name="Quail M.A."/>
            <person name="Achtman M."/>
            <person name="Atkin R."/>
            <person name="Baker S."/>
            <person name="Basham D."/>
            <person name="Bason N."/>
            <person name="Cherevach I."/>
            <person name="Chillingworth T."/>
            <person name="Collins M."/>
            <person name="Cronin A."/>
            <person name="Davis P."/>
            <person name="Doggett J."/>
            <person name="Feltwell T."/>
            <person name="Goble A."/>
            <person name="Hamlin N."/>
            <person name="Hauser H."/>
            <person name="Holroyd S."/>
            <person name="Jagels K."/>
            <person name="Leather S."/>
            <person name="Moule S."/>
            <person name="Norberczak H."/>
            <person name="O'Neil S."/>
            <person name="Ormond D."/>
            <person name="Price C."/>
            <person name="Rabbinowitsch E."/>
            <person name="Rutter S."/>
            <person name="Sanders M."/>
            <person name="Saunders D."/>
            <person name="Seeger K."/>
            <person name="Sharp S."/>
            <person name="Simmonds M."/>
            <person name="Skelton J."/>
            <person name="Squares R."/>
            <person name="Squares S."/>
            <person name="Stevens K."/>
            <person name="Unwin L."/>
            <person name="Whitehead S."/>
            <person name="Barrell B.G."/>
            <person name="Maskell D.J."/>
        </authorList>
    </citation>
    <scope>NUCLEOTIDE SEQUENCE [LARGE SCALE GENOMIC DNA]</scope>
    <source>
        <strain>ATCC BAA-588 / NCTC 13252 / RB50</strain>
    </source>
</reference>
<proteinExistence type="inferred from homology"/>
<name>SYA_BORBR</name>
<dbReference type="EC" id="6.1.1.7" evidence="1"/>
<dbReference type="EMBL" id="BX640446">
    <property type="protein sequence ID" value="CAE33683.1"/>
    <property type="molecule type" value="Genomic_DNA"/>
</dbReference>
<dbReference type="RefSeq" id="WP_003810664.1">
    <property type="nucleotide sequence ID" value="NC_002927.3"/>
</dbReference>
<dbReference type="SMR" id="Q7WHL6"/>
<dbReference type="GeneID" id="56479301"/>
<dbReference type="KEGG" id="bbr:BB3191"/>
<dbReference type="eggNOG" id="COG0013">
    <property type="taxonomic scope" value="Bacteria"/>
</dbReference>
<dbReference type="HOGENOM" id="CLU_004485_1_1_4"/>
<dbReference type="Proteomes" id="UP000001027">
    <property type="component" value="Chromosome"/>
</dbReference>
<dbReference type="GO" id="GO:0005829">
    <property type="term" value="C:cytosol"/>
    <property type="evidence" value="ECO:0007669"/>
    <property type="project" value="TreeGrafter"/>
</dbReference>
<dbReference type="GO" id="GO:0004813">
    <property type="term" value="F:alanine-tRNA ligase activity"/>
    <property type="evidence" value="ECO:0007669"/>
    <property type="project" value="UniProtKB-UniRule"/>
</dbReference>
<dbReference type="GO" id="GO:0002161">
    <property type="term" value="F:aminoacyl-tRNA deacylase activity"/>
    <property type="evidence" value="ECO:0007669"/>
    <property type="project" value="TreeGrafter"/>
</dbReference>
<dbReference type="GO" id="GO:0005524">
    <property type="term" value="F:ATP binding"/>
    <property type="evidence" value="ECO:0007669"/>
    <property type="project" value="UniProtKB-UniRule"/>
</dbReference>
<dbReference type="GO" id="GO:0000049">
    <property type="term" value="F:tRNA binding"/>
    <property type="evidence" value="ECO:0007669"/>
    <property type="project" value="UniProtKB-KW"/>
</dbReference>
<dbReference type="GO" id="GO:0008270">
    <property type="term" value="F:zinc ion binding"/>
    <property type="evidence" value="ECO:0007669"/>
    <property type="project" value="UniProtKB-UniRule"/>
</dbReference>
<dbReference type="GO" id="GO:0006419">
    <property type="term" value="P:alanyl-tRNA aminoacylation"/>
    <property type="evidence" value="ECO:0007669"/>
    <property type="project" value="UniProtKB-UniRule"/>
</dbReference>
<dbReference type="GO" id="GO:0045892">
    <property type="term" value="P:negative regulation of DNA-templated transcription"/>
    <property type="evidence" value="ECO:0007669"/>
    <property type="project" value="TreeGrafter"/>
</dbReference>
<dbReference type="CDD" id="cd00673">
    <property type="entry name" value="AlaRS_core"/>
    <property type="match status" value="1"/>
</dbReference>
<dbReference type="FunFam" id="2.40.30.130:FF:000001">
    <property type="entry name" value="Alanine--tRNA ligase"/>
    <property type="match status" value="1"/>
</dbReference>
<dbReference type="FunFam" id="3.10.310.40:FF:000001">
    <property type="entry name" value="Alanine--tRNA ligase"/>
    <property type="match status" value="1"/>
</dbReference>
<dbReference type="FunFam" id="3.30.54.20:FF:000001">
    <property type="entry name" value="Alanine--tRNA ligase"/>
    <property type="match status" value="1"/>
</dbReference>
<dbReference type="FunFam" id="3.30.930.10:FF:000004">
    <property type="entry name" value="Alanine--tRNA ligase"/>
    <property type="match status" value="1"/>
</dbReference>
<dbReference type="FunFam" id="3.30.980.10:FF:000004">
    <property type="entry name" value="Alanine--tRNA ligase, cytoplasmic"/>
    <property type="match status" value="1"/>
</dbReference>
<dbReference type="Gene3D" id="2.40.30.130">
    <property type="match status" value="1"/>
</dbReference>
<dbReference type="Gene3D" id="3.10.310.40">
    <property type="match status" value="1"/>
</dbReference>
<dbReference type="Gene3D" id="3.30.54.20">
    <property type="match status" value="1"/>
</dbReference>
<dbReference type="Gene3D" id="6.10.250.550">
    <property type="match status" value="1"/>
</dbReference>
<dbReference type="Gene3D" id="3.30.930.10">
    <property type="entry name" value="Bira Bifunctional Protein, Domain 2"/>
    <property type="match status" value="1"/>
</dbReference>
<dbReference type="Gene3D" id="3.30.980.10">
    <property type="entry name" value="Threonyl-trna Synthetase, Chain A, domain 2"/>
    <property type="match status" value="1"/>
</dbReference>
<dbReference type="HAMAP" id="MF_00036_B">
    <property type="entry name" value="Ala_tRNA_synth_B"/>
    <property type="match status" value="1"/>
</dbReference>
<dbReference type="InterPro" id="IPR045864">
    <property type="entry name" value="aa-tRNA-synth_II/BPL/LPL"/>
</dbReference>
<dbReference type="InterPro" id="IPR002318">
    <property type="entry name" value="Ala-tRNA-lgiase_IIc"/>
</dbReference>
<dbReference type="InterPro" id="IPR018162">
    <property type="entry name" value="Ala-tRNA-ligase_IIc_anticod-bd"/>
</dbReference>
<dbReference type="InterPro" id="IPR018165">
    <property type="entry name" value="Ala-tRNA-synth_IIc_core"/>
</dbReference>
<dbReference type="InterPro" id="IPR018164">
    <property type="entry name" value="Ala-tRNA-synth_IIc_N"/>
</dbReference>
<dbReference type="InterPro" id="IPR050058">
    <property type="entry name" value="Ala-tRNA_ligase"/>
</dbReference>
<dbReference type="InterPro" id="IPR023033">
    <property type="entry name" value="Ala_tRNA_ligase_euk/bac"/>
</dbReference>
<dbReference type="InterPro" id="IPR003156">
    <property type="entry name" value="DHHA1_dom"/>
</dbReference>
<dbReference type="InterPro" id="IPR018163">
    <property type="entry name" value="Thr/Ala-tRNA-synth_IIc_edit"/>
</dbReference>
<dbReference type="InterPro" id="IPR009000">
    <property type="entry name" value="Transl_B-barrel_sf"/>
</dbReference>
<dbReference type="InterPro" id="IPR012947">
    <property type="entry name" value="tRNA_SAD"/>
</dbReference>
<dbReference type="NCBIfam" id="TIGR00344">
    <property type="entry name" value="alaS"/>
    <property type="match status" value="1"/>
</dbReference>
<dbReference type="PANTHER" id="PTHR11777:SF9">
    <property type="entry name" value="ALANINE--TRNA LIGASE, CYTOPLASMIC"/>
    <property type="match status" value="1"/>
</dbReference>
<dbReference type="PANTHER" id="PTHR11777">
    <property type="entry name" value="ALANYL-TRNA SYNTHETASE"/>
    <property type="match status" value="1"/>
</dbReference>
<dbReference type="Pfam" id="PF02272">
    <property type="entry name" value="DHHA1"/>
    <property type="match status" value="1"/>
</dbReference>
<dbReference type="Pfam" id="PF01411">
    <property type="entry name" value="tRNA-synt_2c"/>
    <property type="match status" value="1"/>
</dbReference>
<dbReference type="Pfam" id="PF07973">
    <property type="entry name" value="tRNA_SAD"/>
    <property type="match status" value="1"/>
</dbReference>
<dbReference type="PRINTS" id="PR00980">
    <property type="entry name" value="TRNASYNTHALA"/>
</dbReference>
<dbReference type="SMART" id="SM00863">
    <property type="entry name" value="tRNA_SAD"/>
    <property type="match status" value="1"/>
</dbReference>
<dbReference type="SUPFAM" id="SSF55681">
    <property type="entry name" value="Class II aaRS and biotin synthetases"/>
    <property type="match status" value="1"/>
</dbReference>
<dbReference type="SUPFAM" id="SSF101353">
    <property type="entry name" value="Putative anticodon-binding domain of alanyl-tRNA synthetase (AlaRS)"/>
    <property type="match status" value="1"/>
</dbReference>
<dbReference type="SUPFAM" id="SSF55186">
    <property type="entry name" value="ThrRS/AlaRS common domain"/>
    <property type="match status" value="1"/>
</dbReference>
<dbReference type="SUPFAM" id="SSF50447">
    <property type="entry name" value="Translation proteins"/>
    <property type="match status" value="1"/>
</dbReference>
<dbReference type="PROSITE" id="PS50860">
    <property type="entry name" value="AA_TRNA_LIGASE_II_ALA"/>
    <property type="match status" value="1"/>
</dbReference>
<keyword id="KW-0030">Aminoacyl-tRNA synthetase</keyword>
<keyword id="KW-0067">ATP-binding</keyword>
<keyword id="KW-0963">Cytoplasm</keyword>
<keyword id="KW-0436">Ligase</keyword>
<keyword id="KW-0479">Metal-binding</keyword>
<keyword id="KW-0547">Nucleotide-binding</keyword>
<keyword id="KW-0648">Protein biosynthesis</keyword>
<keyword id="KW-0694">RNA-binding</keyword>
<keyword id="KW-0820">tRNA-binding</keyword>
<keyword id="KW-0862">Zinc</keyword>
<protein>
    <recommendedName>
        <fullName evidence="1">Alanine--tRNA ligase</fullName>
        <ecNumber evidence="1">6.1.1.7</ecNumber>
    </recommendedName>
    <alternativeName>
        <fullName evidence="1">Alanyl-tRNA synthetase</fullName>
        <shortName evidence="1">AlaRS</shortName>
    </alternativeName>
</protein>
<evidence type="ECO:0000255" key="1">
    <source>
        <dbReference type="HAMAP-Rule" id="MF_00036"/>
    </source>
</evidence>
<accession>Q7WHL6</accession>
<organism>
    <name type="scientific">Bordetella bronchiseptica (strain ATCC BAA-588 / NCTC 13252 / RB50)</name>
    <name type="common">Alcaligenes bronchisepticus</name>
    <dbReference type="NCBI Taxonomy" id="257310"/>
    <lineage>
        <taxon>Bacteria</taxon>
        <taxon>Pseudomonadati</taxon>
        <taxon>Pseudomonadota</taxon>
        <taxon>Betaproteobacteria</taxon>
        <taxon>Burkholderiales</taxon>
        <taxon>Alcaligenaceae</taxon>
        <taxon>Bordetella</taxon>
    </lineage>
</organism>